<comment type="function">
    <text evidence="1">Usually encoded in the trnK tRNA gene intron. Probably assists in splicing its own and other chloroplast group II introns.</text>
</comment>
<comment type="subcellular location">
    <subcellularLocation>
        <location>Plastid</location>
        <location>Chloroplast</location>
    </subcellularLocation>
</comment>
<comment type="similarity">
    <text evidence="1">Belongs to the intron maturase 2 family. MatK subfamily.</text>
</comment>
<sequence length="503" mass="60762">MKEYKVYLERARSRQQHFLYPLIFREYIYGLAYSHNLNRSIFVENIGYDKKYSLLIVKRLITRMYQQNHLIIWANDSNKNPFWGYKNNYYSQIISEGFAIVVEIPFFLQLSSSLEEEEIIKSYKNLRSIHSIFPFLEDKLTYLNYVSDIRIPYPIHLEILVQILRYWVKDAPFFHFLRLFLWNWNSFITTKKSISTFSKSHRRFFLFLYNFYVCEYESIFVFLRNKSSHLRLKSFSVFFERIFFYAKREHLVKVFAKDFSYTLTFFKDPNIHYVRYQGKCILASKNAPFLMNKWKHFFIHLWQCFFDVWSQPRMININPLSEHSFQLLGYFSNVRLNRSVVRSQMLQNTFLIEIVIKKLDIIVPIIPLIRSLAKAKFCNVLGQPISKPVWADSSDFDIIDRFLGICRNLSHYYNGSSKKKSLYRIKYILRLSCIKTLACKHKSTVRAFLKRSGSEEFLQEFFTEEEEILAFLFPRDSSTLQRLHRNRIWYLDILFSNDLVHDE</sequence>
<organism>
    <name type="scientific">Vicia faba</name>
    <name type="common">Broad bean</name>
    <name type="synonym">Faba vulgaris</name>
    <dbReference type="NCBI Taxonomy" id="3906"/>
    <lineage>
        <taxon>Eukaryota</taxon>
        <taxon>Viridiplantae</taxon>
        <taxon>Streptophyta</taxon>
        <taxon>Embryophyta</taxon>
        <taxon>Tracheophyta</taxon>
        <taxon>Spermatophyta</taxon>
        <taxon>Magnoliopsida</taxon>
        <taxon>eudicotyledons</taxon>
        <taxon>Gunneridae</taxon>
        <taxon>Pentapetalae</taxon>
        <taxon>rosids</taxon>
        <taxon>fabids</taxon>
        <taxon>Fabales</taxon>
        <taxon>Fabaceae</taxon>
        <taxon>Papilionoideae</taxon>
        <taxon>50 kb inversion clade</taxon>
        <taxon>NPAAA clade</taxon>
        <taxon>Hologalegina</taxon>
        <taxon>IRL clade</taxon>
        <taxon>Fabeae</taxon>
        <taxon>Vicia</taxon>
    </lineage>
</organism>
<gene>
    <name evidence="1" type="primary">matK</name>
</gene>
<keyword id="KW-0150">Chloroplast</keyword>
<keyword id="KW-0507">mRNA processing</keyword>
<keyword id="KW-0934">Plastid</keyword>
<keyword id="KW-0694">RNA-binding</keyword>
<keyword id="KW-0819">tRNA processing</keyword>
<protein>
    <recommendedName>
        <fullName evidence="1">Maturase K</fullName>
    </recommendedName>
    <alternativeName>
        <fullName evidence="1">Intron maturase</fullName>
    </alternativeName>
</protein>
<evidence type="ECO:0000255" key="1">
    <source>
        <dbReference type="HAMAP-Rule" id="MF_01390"/>
    </source>
</evidence>
<name>MATK_VICFA</name>
<feature type="chain" id="PRO_0000143782" description="Maturase K">
    <location>
        <begin position="1"/>
        <end position="503"/>
    </location>
</feature>
<reference key="1">
    <citation type="journal article" date="2004" name="Am. J. Bot.">
        <title>A phylogeny of legumes (Leguminosae) based on analysis of the plastid matK gene resolves many well-supported subclades within the family.</title>
        <authorList>
            <person name="Wojciechowski M.F."/>
            <person name="Lavin M."/>
            <person name="Sanderson M.J."/>
        </authorList>
        <dbReference type="AGRICOLA" id="IND43661289"/>
    </citation>
    <scope>NUCLEOTIDE SEQUENCE [GENOMIC DNA]</scope>
</reference>
<proteinExistence type="inferred from homology"/>
<geneLocation type="chloroplast"/>
<dbReference type="EMBL" id="AY386899">
    <property type="protein sequence ID" value="AAQ91977.1"/>
    <property type="molecule type" value="Genomic_DNA"/>
</dbReference>
<dbReference type="GO" id="GO:0009507">
    <property type="term" value="C:chloroplast"/>
    <property type="evidence" value="ECO:0007669"/>
    <property type="project" value="UniProtKB-SubCell"/>
</dbReference>
<dbReference type="GO" id="GO:0003723">
    <property type="term" value="F:RNA binding"/>
    <property type="evidence" value="ECO:0007669"/>
    <property type="project" value="UniProtKB-KW"/>
</dbReference>
<dbReference type="GO" id="GO:0006397">
    <property type="term" value="P:mRNA processing"/>
    <property type="evidence" value="ECO:0007669"/>
    <property type="project" value="UniProtKB-KW"/>
</dbReference>
<dbReference type="GO" id="GO:0008380">
    <property type="term" value="P:RNA splicing"/>
    <property type="evidence" value="ECO:0007669"/>
    <property type="project" value="UniProtKB-UniRule"/>
</dbReference>
<dbReference type="GO" id="GO:0008033">
    <property type="term" value="P:tRNA processing"/>
    <property type="evidence" value="ECO:0007669"/>
    <property type="project" value="UniProtKB-KW"/>
</dbReference>
<dbReference type="HAMAP" id="MF_01390">
    <property type="entry name" value="MatK"/>
    <property type="match status" value="1"/>
</dbReference>
<dbReference type="InterPro" id="IPR024937">
    <property type="entry name" value="Domain_X"/>
</dbReference>
<dbReference type="InterPro" id="IPR002866">
    <property type="entry name" value="Maturase_MatK"/>
</dbReference>
<dbReference type="InterPro" id="IPR024942">
    <property type="entry name" value="Maturase_MatK_N"/>
</dbReference>
<dbReference type="PANTHER" id="PTHR34811">
    <property type="entry name" value="MATURASE K"/>
    <property type="match status" value="1"/>
</dbReference>
<dbReference type="PANTHER" id="PTHR34811:SF1">
    <property type="entry name" value="MATURASE K"/>
    <property type="match status" value="1"/>
</dbReference>
<dbReference type="Pfam" id="PF01348">
    <property type="entry name" value="Intron_maturas2"/>
    <property type="match status" value="1"/>
</dbReference>
<dbReference type="Pfam" id="PF01824">
    <property type="entry name" value="MatK_N"/>
    <property type="match status" value="1"/>
</dbReference>
<accession>Q5YK03</accession>